<proteinExistence type="inferred from homology"/>
<evidence type="ECO:0000255" key="1">
    <source>
        <dbReference type="HAMAP-Rule" id="MF_01043"/>
    </source>
</evidence>
<protein>
    <recommendedName>
        <fullName evidence="1">Glycerol-3-phosphate acyltransferase</fullName>
    </recommendedName>
    <alternativeName>
        <fullName evidence="1">Acyl-PO4 G3P acyltransferase</fullName>
    </alternativeName>
    <alternativeName>
        <fullName evidence="1">Acyl-phosphate--glycerol-3-phosphate acyltransferase</fullName>
    </alternativeName>
    <alternativeName>
        <fullName evidence="1">G3P acyltransferase</fullName>
        <shortName evidence="1">GPAT</shortName>
        <ecNumber evidence="1">2.3.1.275</ecNumber>
    </alternativeName>
    <alternativeName>
        <fullName evidence="1">Lysophosphatidic acid synthase</fullName>
        <shortName evidence="1">LPA synthase</shortName>
    </alternativeName>
</protein>
<dbReference type="EC" id="2.3.1.275" evidence="1"/>
<dbReference type="EMBL" id="CP000919">
    <property type="protein sequence ID" value="ACO18201.1"/>
    <property type="molecule type" value="Genomic_DNA"/>
</dbReference>
<dbReference type="RefSeq" id="WP_000628789.1">
    <property type="nucleotide sequence ID" value="NC_012466.1"/>
</dbReference>
<dbReference type="SMR" id="C1CDJ9"/>
<dbReference type="GeneID" id="45653793"/>
<dbReference type="KEGG" id="sjj:SPJ_0789"/>
<dbReference type="HOGENOM" id="CLU_081254_4_0_9"/>
<dbReference type="UniPathway" id="UPA00085"/>
<dbReference type="Proteomes" id="UP000002206">
    <property type="component" value="Chromosome"/>
</dbReference>
<dbReference type="GO" id="GO:0005886">
    <property type="term" value="C:plasma membrane"/>
    <property type="evidence" value="ECO:0007669"/>
    <property type="project" value="UniProtKB-SubCell"/>
</dbReference>
<dbReference type="GO" id="GO:0043772">
    <property type="term" value="F:acyl-phosphate glycerol-3-phosphate acyltransferase activity"/>
    <property type="evidence" value="ECO:0007669"/>
    <property type="project" value="UniProtKB-UniRule"/>
</dbReference>
<dbReference type="GO" id="GO:0008654">
    <property type="term" value="P:phospholipid biosynthetic process"/>
    <property type="evidence" value="ECO:0007669"/>
    <property type="project" value="UniProtKB-UniRule"/>
</dbReference>
<dbReference type="HAMAP" id="MF_01043">
    <property type="entry name" value="PlsY"/>
    <property type="match status" value="1"/>
</dbReference>
<dbReference type="InterPro" id="IPR003811">
    <property type="entry name" value="G3P_acylTferase_PlsY"/>
</dbReference>
<dbReference type="NCBIfam" id="TIGR00023">
    <property type="entry name" value="glycerol-3-phosphate 1-O-acyltransferase PlsY"/>
    <property type="match status" value="1"/>
</dbReference>
<dbReference type="PANTHER" id="PTHR30309:SF0">
    <property type="entry name" value="GLYCEROL-3-PHOSPHATE ACYLTRANSFERASE-RELATED"/>
    <property type="match status" value="1"/>
</dbReference>
<dbReference type="PANTHER" id="PTHR30309">
    <property type="entry name" value="INNER MEMBRANE PROTEIN YGIH"/>
    <property type="match status" value="1"/>
</dbReference>
<dbReference type="Pfam" id="PF02660">
    <property type="entry name" value="G3P_acyltransf"/>
    <property type="match status" value="1"/>
</dbReference>
<dbReference type="SMART" id="SM01207">
    <property type="entry name" value="G3P_acyltransf"/>
    <property type="match status" value="1"/>
</dbReference>
<gene>
    <name evidence="1" type="primary">plsY</name>
    <name type="ordered locus">SPJ_0789</name>
</gene>
<comment type="function">
    <text evidence="1">Catalyzes the transfer of an acyl group from acyl-phosphate (acyl-PO(4)) to glycerol-3-phosphate (G3P) to form lysophosphatidic acid (LPA). This enzyme utilizes acyl-phosphate as fatty acyl donor, but not acyl-CoA or acyl-ACP.</text>
</comment>
<comment type="catalytic activity">
    <reaction evidence="1">
        <text>an acyl phosphate + sn-glycerol 3-phosphate = a 1-acyl-sn-glycero-3-phosphate + phosphate</text>
        <dbReference type="Rhea" id="RHEA:34075"/>
        <dbReference type="ChEBI" id="CHEBI:43474"/>
        <dbReference type="ChEBI" id="CHEBI:57597"/>
        <dbReference type="ChEBI" id="CHEBI:57970"/>
        <dbReference type="ChEBI" id="CHEBI:59918"/>
        <dbReference type="EC" id="2.3.1.275"/>
    </reaction>
</comment>
<comment type="pathway">
    <text evidence="1">Lipid metabolism; phospholipid metabolism.</text>
</comment>
<comment type="subunit">
    <text evidence="1">Probably interacts with PlsX.</text>
</comment>
<comment type="subcellular location">
    <subcellularLocation>
        <location evidence="1">Cell membrane</location>
        <topology evidence="1">Multi-pass membrane protein</topology>
    </subcellularLocation>
</comment>
<comment type="similarity">
    <text evidence="1">Belongs to the PlsY family.</text>
</comment>
<name>PLSY_STRZJ</name>
<keyword id="KW-1003">Cell membrane</keyword>
<keyword id="KW-0444">Lipid biosynthesis</keyword>
<keyword id="KW-0443">Lipid metabolism</keyword>
<keyword id="KW-0472">Membrane</keyword>
<keyword id="KW-0594">Phospholipid biosynthesis</keyword>
<keyword id="KW-1208">Phospholipid metabolism</keyword>
<keyword id="KW-0808">Transferase</keyword>
<keyword id="KW-0812">Transmembrane</keyword>
<keyword id="KW-1133">Transmembrane helix</keyword>
<sequence>MITIVLLILAYLLGSIPSGLWIGQVFFQINLREHGSGNTGTTNTFRILGKKAGMATFVIDFFKGTLATLLPIIFHLQGVSPLIFGLLAVIGHTFPIFAGFKGGKAVATSAGVIFGFAPIFCLYLAIIFFGALYLGSMISLSSVTASIAAVIGVLLFPLFGFILSNYDSLFIAIILALASLIIIRHKDNIARIKNKTENLVPWGLNLTHQDPKK</sequence>
<feature type="chain" id="PRO_1000149586" description="Glycerol-3-phosphate acyltransferase">
    <location>
        <begin position="1"/>
        <end position="213"/>
    </location>
</feature>
<feature type="transmembrane region" description="Helical" evidence="1">
    <location>
        <begin position="2"/>
        <end position="22"/>
    </location>
</feature>
<feature type="transmembrane region" description="Helical" evidence="1">
    <location>
        <begin position="52"/>
        <end position="74"/>
    </location>
</feature>
<feature type="transmembrane region" description="Helical" evidence="1">
    <location>
        <begin position="81"/>
        <end position="100"/>
    </location>
</feature>
<feature type="transmembrane region" description="Helical" evidence="1">
    <location>
        <begin position="112"/>
        <end position="132"/>
    </location>
</feature>
<feature type="transmembrane region" description="Helical" evidence="1">
    <location>
        <begin position="143"/>
        <end position="163"/>
    </location>
</feature>
<feature type="transmembrane region" description="Helical" evidence="1">
    <location>
        <begin position="164"/>
        <end position="184"/>
    </location>
</feature>
<accession>C1CDJ9</accession>
<organism>
    <name type="scientific">Streptococcus pneumoniae (strain JJA)</name>
    <dbReference type="NCBI Taxonomy" id="488222"/>
    <lineage>
        <taxon>Bacteria</taxon>
        <taxon>Bacillati</taxon>
        <taxon>Bacillota</taxon>
        <taxon>Bacilli</taxon>
        <taxon>Lactobacillales</taxon>
        <taxon>Streptococcaceae</taxon>
        <taxon>Streptococcus</taxon>
    </lineage>
</organism>
<reference key="1">
    <citation type="journal article" date="2010" name="Genome Biol.">
        <title>Structure and dynamics of the pan-genome of Streptococcus pneumoniae and closely related species.</title>
        <authorList>
            <person name="Donati C."/>
            <person name="Hiller N.L."/>
            <person name="Tettelin H."/>
            <person name="Muzzi A."/>
            <person name="Croucher N.J."/>
            <person name="Angiuoli S.V."/>
            <person name="Oggioni M."/>
            <person name="Dunning Hotopp J.C."/>
            <person name="Hu F.Z."/>
            <person name="Riley D.R."/>
            <person name="Covacci A."/>
            <person name="Mitchell T.J."/>
            <person name="Bentley S.D."/>
            <person name="Kilian M."/>
            <person name="Ehrlich G.D."/>
            <person name="Rappuoli R."/>
            <person name="Moxon E.R."/>
            <person name="Masignani V."/>
        </authorList>
    </citation>
    <scope>NUCLEOTIDE SEQUENCE [LARGE SCALE GENOMIC DNA]</scope>
    <source>
        <strain>JJA</strain>
    </source>
</reference>